<reference key="1">
    <citation type="journal article" date="2018" name="Cell. Mol. Life Sci.">
        <title>PHAB toxins: a unique family of predatory sea anemone toxins evolving via intra-gene concerted evolution defines a new peptide fold.</title>
        <authorList>
            <person name="Madio B."/>
            <person name="Peigneur S."/>
            <person name="Chin Y.K.Y."/>
            <person name="Hamilton B.R."/>
            <person name="Henriques S.T."/>
            <person name="Smith J.J."/>
            <person name="Cristofori-Armstrong B."/>
            <person name="Dekan Z."/>
            <person name="Boughton B.A."/>
            <person name="Alewood P.F."/>
            <person name="Tytgat J."/>
            <person name="King G.F."/>
            <person name="Undheim E.A.B."/>
        </authorList>
    </citation>
    <scope>NUCLEOTIDE SEQUENCE [MRNA]</scope>
    <scope>PROTEIN SEQUENCE</scope>
    <scope>SYNTHESIS</scope>
    <scope>MASS SPECTROMETRY</scope>
    <scope>STRUCTURE BY NMR</scope>
    <scope>FUNCTION</scope>
    <scope>BIOASSAY</scope>
    <scope>SUBCELLULAR LOCATION</scope>
    <scope>TISSUE SPECIFICITY</scope>
    <scope>AMIDATION AT GLY-17</scope>
    <scope>DISULFIDE BOND</scope>
    <source>
        <tissue>Tentacle</tissue>
    </source>
</reference>
<keyword id="KW-0002">3D-structure</keyword>
<keyword id="KW-0027">Amidation</keyword>
<keyword id="KW-0903">Direct protein sequencing</keyword>
<keyword id="KW-1015">Disulfide bond</keyword>
<keyword id="KW-0872">Ion channel impairing toxin</keyword>
<keyword id="KW-0166">Nematocyst</keyword>
<keyword id="KW-0528">Neurotoxin</keyword>
<keyword id="KW-0632">Potassium channel impairing toxin</keyword>
<keyword id="KW-1185">Reference proteome</keyword>
<keyword id="KW-0964">Secreted</keyword>
<keyword id="KW-0800">Toxin</keyword>
<keyword id="KW-1220">Voltage-gated potassium channel impairing toxin</keyword>
<comment type="function">
    <text evidence="1">Voltage-gated potassium channel inhibitor that is certainly used for prey capture (PubMed:30109357). It inhibits several potassium channels, but not all (Kv1.1/KCNA1 (IC(50)=353 nM), Kv1.2/KCNA2 (IC(50)=146 nM), Kv1.3/KCNA3 (IC(50)=3051 nM), Kv1.6/KCNA6 (IC(50)=191 nM), and Shaker IR (23% inhibition at 3 uM)) (PubMed:30109357). In vivo, injection of this toxin into amphipods results in impaired swimming followed by contractile paralysis (PubMed:30109357).</text>
</comment>
<comment type="subcellular location">
    <subcellularLocation>
        <location evidence="1">Secreted</location>
    </subcellularLocation>
    <subcellularLocation>
        <location evidence="4">Nematocyst</location>
    </subcellularLocation>
</comment>
<comment type="tissue specificity">
    <text evidence="1">Expressed by tentacle.</text>
</comment>
<comment type="domain">
    <text evidence="4">Adopts the three-dimensional structure 'proline-hinged asymmetric beta-hairpin-like' (PHAB) fold.</text>
</comment>
<comment type="domain">
    <text evidence="4">The prepropeptide contains 10 domains separated by dibasic cleavage sites: a signal peptide, three cysteine-containing propeptide domains (CysPro), three cysteine-free propeptide domains (LinearPro) and three Kappa-actitoxin-Ate1a (PHAB) domains. The sequence 'CysPro-LinearPro-PHAB' is repeated three times.</text>
</comment>
<comment type="mass spectrometry" mass="1887.93" method="MALDI" evidence="1">
    <text>Monoisotopic mass.</text>
</comment>
<comment type="miscellaneous">
    <text evidence="1">Negative results: does not show antimicrobial activity (when 256 ug/mL are tested on E.coli, K.pneumoniae, A.baumannii, P.aeruginosa, and S.aureus, as well as on fungi C.albicans and C.neoformans) (PubMed:30109357). Is not cytotoxic or cytolytic against cultured human cancer cell lines and erythrocytes (PubMed:30109357). It shows only a weak affinity for lipid membranes (PubMed:30109357). It has no effect on Kv1.4/KCNA4, Kv1.5/KCNA5, Kv2.1/KCNB1, Kv3.1/KCNC1, Kv4.2/KCND2, Kv7.2/KCNQ2, and Kv11.1/KCNH2/ERG1 (PubMed:30109357).</text>
</comment>
<comment type="similarity">
    <text evidence="3">Belongs to the sea anemonne PHAB family.</text>
</comment>
<name>KPHAB_ACTTE</name>
<feature type="peptide" id="PRO_0000445681" description="Kappa-actitoxin-Ate1a" evidence="1">
    <location>
        <begin position="1"/>
        <end position="17"/>
    </location>
</feature>
<feature type="modified residue" description="Glycine amide" evidence="1">
    <location>
        <position position="17"/>
    </location>
</feature>
<feature type="disulfide bond" evidence="1 5">
    <location>
        <begin position="2"/>
        <end position="16"/>
    </location>
</feature>
<feature type="disulfide bond" evidence="1 5">
    <location>
        <begin position="5"/>
        <end position="10"/>
    </location>
</feature>
<dbReference type="PDB" id="6AZA">
    <property type="method" value="NMR"/>
    <property type="chains" value="A=1-17"/>
</dbReference>
<dbReference type="PDBsum" id="6AZA"/>
<dbReference type="BMRB" id="P0DM22"/>
<dbReference type="SMR" id="P0DM22"/>
<dbReference type="InParanoid" id="P0DM22"/>
<dbReference type="Proteomes" id="UP000515163">
    <property type="component" value="Unplaced"/>
</dbReference>
<dbReference type="GO" id="GO:0005576">
    <property type="term" value="C:extracellular region"/>
    <property type="evidence" value="ECO:0007669"/>
    <property type="project" value="UniProtKB-SubCell"/>
</dbReference>
<dbReference type="GO" id="GO:0042151">
    <property type="term" value="C:nematocyst"/>
    <property type="evidence" value="ECO:0007669"/>
    <property type="project" value="UniProtKB-SubCell"/>
</dbReference>
<dbReference type="GO" id="GO:0015459">
    <property type="term" value="F:potassium channel regulator activity"/>
    <property type="evidence" value="ECO:0007669"/>
    <property type="project" value="UniProtKB-KW"/>
</dbReference>
<dbReference type="GO" id="GO:0090729">
    <property type="term" value="F:toxin activity"/>
    <property type="evidence" value="ECO:0007669"/>
    <property type="project" value="UniProtKB-KW"/>
</dbReference>
<organism>
    <name type="scientific">Actinia tenebrosa</name>
    <name type="common">Australian red waratah sea anemone</name>
    <dbReference type="NCBI Taxonomy" id="6105"/>
    <lineage>
        <taxon>Eukaryota</taxon>
        <taxon>Metazoa</taxon>
        <taxon>Cnidaria</taxon>
        <taxon>Anthozoa</taxon>
        <taxon>Hexacorallia</taxon>
        <taxon>Actiniaria</taxon>
        <taxon>Actiniidae</taxon>
        <taxon>Actinia</taxon>
    </lineage>
</organism>
<evidence type="ECO:0000269" key="1">
    <source>
    </source>
</evidence>
<evidence type="ECO:0000303" key="2">
    <source>
    </source>
</evidence>
<evidence type="ECO:0000305" key="3"/>
<evidence type="ECO:0000305" key="4">
    <source>
    </source>
</evidence>
<evidence type="ECO:0007744" key="5">
    <source>
        <dbReference type="PDB" id="6AZA"/>
    </source>
</evidence>
<accession>P0DM22</accession>
<accession>A0A452CSQ6</accession>
<protein>
    <recommendedName>
        <fullName evidence="2">Kappa-actitoxin-Ate1a</fullName>
        <shortName evidence="2">Ate1a</shortName>
    </recommendedName>
</protein>
<sequence length="17" mass="1894">RCKTCSKGRCRPKPNCG</sequence>
<proteinExistence type="evidence at protein level"/>